<accession>P01664</accession>
<reference key="1">
    <citation type="journal article" date="1978" name="Proc. Natl. Acad. Sci. U.S.A.">
        <title>Mechanisms of antibody diversity: multiple genes encode structurally related mouse kappa variable regions.</title>
        <authorList>
            <person name="McKean D.J."/>
            <person name="Bell M."/>
            <person name="Potter M."/>
        </authorList>
    </citation>
    <scope>PROTEIN SEQUENCE</scope>
</reference>
<protein>
    <recommendedName>
        <fullName>Ig kappa chain V-III region CBPC 101</fullName>
    </recommendedName>
</protein>
<dbReference type="PIR" id="A01936">
    <property type="entry name" value="KVMSC1"/>
</dbReference>
<dbReference type="SMR" id="P01664"/>
<dbReference type="FunCoup" id="P01664">
    <property type="interactions" value="764"/>
</dbReference>
<dbReference type="jPOST" id="P01664"/>
<dbReference type="InParanoid" id="P01664"/>
<dbReference type="Proteomes" id="UP000000589">
    <property type="component" value="Unplaced"/>
</dbReference>
<dbReference type="RNAct" id="P01664">
    <property type="molecule type" value="protein"/>
</dbReference>
<dbReference type="GO" id="GO:0019814">
    <property type="term" value="C:immunoglobulin complex"/>
    <property type="evidence" value="ECO:0000318"/>
    <property type="project" value="GO_Central"/>
</dbReference>
<dbReference type="GO" id="GO:0002250">
    <property type="term" value="P:adaptive immune response"/>
    <property type="evidence" value="ECO:0007669"/>
    <property type="project" value="UniProtKB-KW"/>
</dbReference>
<dbReference type="GO" id="GO:0006955">
    <property type="term" value="P:immune response"/>
    <property type="evidence" value="ECO:0000318"/>
    <property type="project" value="GO_Central"/>
</dbReference>
<dbReference type="CDD" id="cd04980">
    <property type="entry name" value="IgV_L_kappa"/>
    <property type="match status" value="1"/>
</dbReference>
<dbReference type="FunFam" id="2.60.40.10:FF:000350">
    <property type="entry name" value="Immunoglobulin kappa chain variable 18-36"/>
    <property type="match status" value="1"/>
</dbReference>
<dbReference type="Gene3D" id="2.60.40.10">
    <property type="entry name" value="Immunoglobulins"/>
    <property type="match status" value="1"/>
</dbReference>
<dbReference type="InterPro" id="IPR007110">
    <property type="entry name" value="Ig-like_dom"/>
</dbReference>
<dbReference type="InterPro" id="IPR036179">
    <property type="entry name" value="Ig-like_dom_sf"/>
</dbReference>
<dbReference type="InterPro" id="IPR013783">
    <property type="entry name" value="Ig-like_fold"/>
</dbReference>
<dbReference type="InterPro" id="IPR003599">
    <property type="entry name" value="Ig_sub"/>
</dbReference>
<dbReference type="InterPro" id="IPR013106">
    <property type="entry name" value="Ig_V-set"/>
</dbReference>
<dbReference type="InterPro" id="IPR050150">
    <property type="entry name" value="IgV_Light_Chain"/>
</dbReference>
<dbReference type="PANTHER" id="PTHR23267">
    <property type="entry name" value="IMMUNOGLOBULIN LIGHT CHAIN"/>
    <property type="match status" value="1"/>
</dbReference>
<dbReference type="Pfam" id="PF07686">
    <property type="entry name" value="V-set"/>
    <property type="match status" value="1"/>
</dbReference>
<dbReference type="SMART" id="SM00409">
    <property type="entry name" value="IG"/>
    <property type="match status" value="1"/>
</dbReference>
<dbReference type="SMART" id="SM00406">
    <property type="entry name" value="IGv"/>
    <property type="match status" value="1"/>
</dbReference>
<dbReference type="SUPFAM" id="SSF48726">
    <property type="entry name" value="Immunoglobulin"/>
    <property type="match status" value="1"/>
</dbReference>
<dbReference type="PROSITE" id="PS50835">
    <property type="entry name" value="IG_LIKE"/>
    <property type="match status" value="1"/>
</dbReference>
<name>KV3AC_MOUSE</name>
<proteinExistence type="evidence at protein level"/>
<sequence>DIVLTQSPASLAVSLGQRATISCKASQSVDYTGESYMNWYQQNPGQSPKLLIYAASNLESGIPARFSGSGSGTDFTLNIHPVEEEDAATYYCQQSNEDPYTFGGGTKLEIK</sequence>
<feature type="chain" id="PRO_0000059786" description="Ig kappa chain V-III region CBPC 101">
    <location>
        <begin position="1"/>
        <end position="111" status="greater than"/>
    </location>
</feature>
<feature type="region of interest" description="Framework-1">
    <location>
        <begin position="1"/>
        <end position="23"/>
    </location>
</feature>
<feature type="region of interest" description="Complementarity-determining-1">
    <location>
        <begin position="24"/>
        <end position="38"/>
    </location>
</feature>
<feature type="region of interest" description="Framework-2">
    <location>
        <begin position="39"/>
        <end position="53"/>
    </location>
</feature>
<feature type="region of interest" description="Complementarity-determining-2">
    <location>
        <begin position="54"/>
        <end position="60"/>
    </location>
</feature>
<feature type="region of interest" description="Framework-3">
    <location>
        <begin position="61"/>
        <end position="92"/>
    </location>
</feature>
<feature type="region of interest" description="Complementarity-determining-3">
    <location>
        <begin position="93"/>
        <end position="101"/>
    </location>
</feature>
<feature type="region of interest" description="Framework-4">
    <location>
        <begin position="102"/>
        <end position="111"/>
    </location>
</feature>
<feature type="disulfide bond" evidence="1">
    <location>
        <begin position="23"/>
        <end position="92"/>
    </location>
</feature>
<feature type="non-terminal residue">
    <location>
        <position position="111"/>
    </location>
</feature>
<keyword id="KW-1064">Adaptive immunity</keyword>
<keyword id="KW-0903">Direct protein sequencing</keyword>
<keyword id="KW-1015">Disulfide bond</keyword>
<keyword id="KW-0391">Immunity</keyword>
<keyword id="KW-1280">Immunoglobulin</keyword>
<keyword id="KW-1185">Reference proteome</keyword>
<comment type="miscellaneous">
    <text>This chain was isolated from a myeloma protein.</text>
</comment>
<evidence type="ECO:0000255" key="1">
    <source>
        <dbReference type="PROSITE-ProRule" id="PRU00114"/>
    </source>
</evidence>
<organism>
    <name type="scientific">Mus musculus</name>
    <name type="common">Mouse</name>
    <dbReference type="NCBI Taxonomy" id="10090"/>
    <lineage>
        <taxon>Eukaryota</taxon>
        <taxon>Metazoa</taxon>
        <taxon>Chordata</taxon>
        <taxon>Craniata</taxon>
        <taxon>Vertebrata</taxon>
        <taxon>Euteleostomi</taxon>
        <taxon>Mammalia</taxon>
        <taxon>Eutheria</taxon>
        <taxon>Euarchontoglires</taxon>
        <taxon>Glires</taxon>
        <taxon>Rodentia</taxon>
        <taxon>Myomorpha</taxon>
        <taxon>Muroidea</taxon>
        <taxon>Muridae</taxon>
        <taxon>Murinae</taxon>
        <taxon>Mus</taxon>
        <taxon>Mus</taxon>
    </lineage>
</organism>